<evidence type="ECO:0000250" key="1">
    <source>
        <dbReference type="UniProtKB" id="P09606"/>
    </source>
</evidence>
<evidence type="ECO:0000250" key="2">
    <source>
        <dbReference type="UniProtKB" id="P15104"/>
    </source>
</evidence>
<evidence type="ECO:0000250" key="3">
    <source>
        <dbReference type="UniProtKB" id="P15105"/>
    </source>
</evidence>
<evidence type="ECO:0000250" key="4">
    <source>
        <dbReference type="UniProtKB" id="P9WN39"/>
    </source>
</evidence>
<evidence type="ECO:0000255" key="5">
    <source>
        <dbReference type="PROSITE-ProRule" id="PRU01330"/>
    </source>
</evidence>
<evidence type="ECO:0000255" key="6">
    <source>
        <dbReference type="PROSITE-ProRule" id="PRU01331"/>
    </source>
</evidence>
<evidence type="ECO:0000269" key="7">
    <source>
    </source>
</evidence>
<evidence type="ECO:0000303" key="8">
    <source>
    </source>
</evidence>
<evidence type="ECO:0000305" key="9"/>
<evidence type="ECO:0007744" key="10">
    <source>
        <dbReference type="PDB" id="2UU7"/>
    </source>
</evidence>
<evidence type="ECO:0007829" key="11">
    <source>
        <dbReference type="PDB" id="2UU7"/>
    </source>
</evidence>
<gene>
    <name evidence="2" type="primary">GLUL</name>
</gene>
<proteinExistence type="evidence at protein level"/>
<accession>Q8HZM5</accession>
<accession>Q8HZM4</accession>
<keyword id="KW-0002">3D-structure</keyword>
<keyword id="KW-0007">Acetylation</keyword>
<keyword id="KW-0037">Angiogenesis</keyword>
<keyword id="KW-0067">ATP-binding</keyword>
<keyword id="KW-1003">Cell membrane</keyword>
<keyword id="KW-0963">Cytoplasm</keyword>
<keyword id="KW-0256">Endoplasmic reticulum</keyword>
<keyword id="KW-0436">Ligase</keyword>
<keyword id="KW-0449">Lipoprotein</keyword>
<keyword id="KW-0460">Magnesium</keyword>
<keyword id="KW-0464">Manganese</keyword>
<keyword id="KW-0472">Membrane</keyword>
<keyword id="KW-0479">Metal-binding</keyword>
<keyword id="KW-0492">Microsome</keyword>
<keyword id="KW-0496">Mitochondrion</keyword>
<keyword id="KW-0547">Nucleotide-binding</keyword>
<keyword id="KW-0564">Palmitate</keyword>
<keyword id="KW-0597">Phosphoprotein</keyword>
<keyword id="KW-1185">Reference proteome</keyword>
<keyword id="KW-0808">Transferase</keyword>
<keyword id="KW-0832">Ubl conjugation</keyword>
<dbReference type="EC" id="6.3.1.2" evidence="2"/>
<dbReference type="EC" id="2.3.1.225" evidence="2"/>
<dbReference type="EMBL" id="AF544242">
    <property type="protein sequence ID" value="AAN41001.1"/>
    <property type="molecule type" value="mRNA"/>
</dbReference>
<dbReference type="EMBL" id="AF544243">
    <property type="protein sequence ID" value="AAN41002.1"/>
    <property type="molecule type" value="Genomic_DNA"/>
</dbReference>
<dbReference type="RefSeq" id="NP_001002965.2">
    <property type="nucleotide sequence ID" value="NM_001002965.2"/>
</dbReference>
<dbReference type="RefSeq" id="NP_001280153.1">
    <property type="nucleotide sequence ID" value="NM_001293224.2"/>
</dbReference>
<dbReference type="PDB" id="2UU7">
    <property type="method" value="X-ray"/>
    <property type="resolution" value="3.00 A"/>
    <property type="chains" value="A/B/C/D/E/F/G/H/I/J/K/L/M/N/O=2-373"/>
</dbReference>
<dbReference type="PDBsum" id="2UU7"/>
<dbReference type="SMR" id="Q8HZM5"/>
<dbReference type="FunCoup" id="Q8HZM5">
    <property type="interactions" value="1030"/>
</dbReference>
<dbReference type="STRING" id="9615.ENSCAFP00000019307"/>
<dbReference type="PaxDb" id="9612-ENSCAFP00000032533"/>
<dbReference type="GeneID" id="403443"/>
<dbReference type="KEGG" id="cfa:403443"/>
<dbReference type="CTD" id="2752"/>
<dbReference type="eggNOG" id="KOG0683">
    <property type="taxonomic scope" value="Eukaryota"/>
</dbReference>
<dbReference type="HOGENOM" id="CLU_036762_1_1_1"/>
<dbReference type="InParanoid" id="Q8HZM5"/>
<dbReference type="OrthoDB" id="1936100at2759"/>
<dbReference type="BRENDA" id="6.3.1.2">
    <property type="organism ID" value="1153"/>
</dbReference>
<dbReference type="SABIO-RK" id="Q8HZM5"/>
<dbReference type="EvolutionaryTrace" id="Q8HZM5"/>
<dbReference type="Proteomes" id="UP000002254">
    <property type="component" value="Unplaced"/>
</dbReference>
<dbReference type="Proteomes" id="UP000694429">
    <property type="component" value="Unplaced"/>
</dbReference>
<dbReference type="Proteomes" id="UP000694542">
    <property type="component" value="Unplaced"/>
</dbReference>
<dbReference type="Proteomes" id="UP000805418">
    <property type="component" value="Unplaced"/>
</dbReference>
<dbReference type="GO" id="GO:0005737">
    <property type="term" value="C:cytoplasm"/>
    <property type="evidence" value="ECO:0000318"/>
    <property type="project" value="GO_Central"/>
</dbReference>
<dbReference type="GO" id="GO:0005829">
    <property type="term" value="C:cytosol"/>
    <property type="evidence" value="ECO:0000250"/>
    <property type="project" value="UniProtKB"/>
</dbReference>
<dbReference type="GO" id="GO:0005783">
    <property type="term" value="C:endoplasmic reticulum"/>
    <property type="evidence" value="ECO:0007669"/>
    <property type="project" value="UniProtKB-KW"/>
</dbReference>
<dbReference type="GO" id="GO:0005739">
    <property type="term" value="C:mitochondrion"/>
    <property type="evidence" value="ECO:0007669"/>
    <property type="project" value="UniProtKB-SubCell"/>
</dbReference>
<dbReference type="GO" id="GO:0005886">
    <property type="term" value="C:plasma membrane"/>
    <property type="evidence" value="ECO:0000250"/>
    <property type="project" value="UniProtKB"/>
</dbReference>
<dbReference type="GO" id="GO:0005524">
    <property type="term" value="F:ATP binding"/>
    <property type="evidence" value="ECO:0007669"/>
    <property type="project" value="UniProtKB-KW"/>
</dbReference>
<dbReference type="GO" id="GO:0004356">
    <property type="term" value="F:glutamine synthetase activity"/>
    <property type="evidence" value="ECO:0000250"/>
    <property type="project" value="UniProtKB"/>
</dbReference>
<dbReference type="GO" id="GO:0046872">
    <property type="term" value="F:metal ion binding"/>
    <property type="evidence" value="ECO:0007669"/>
    <property type="project" value="UniProtKB-KW"/>
</dbReference>
<dbReference type="GO" id="GO:0019706">
    <property type="term" value="F:protein-cysteine S-palmitoyltransferase activity"/>
    <property type="evidence" value="ECO:0000250"/>
    <property type="project" value="UniProtKB"/>
</dbReference>
<dbReference type="GO" id="GO:0001525">
    <property type="term" value="P:angiogenesis"/>
    <property type="evidence" value="ECO:0007669"/>
    <property type="project" value="UniProtKB-KW"/>
</dbReference>
<dbReference type="GO" id="GO:0006542">
    <property type="term" value="P:glutamine biosynthetic process"/>
    <property type="evidence" value="ECO:0000318"/>
    <property type="project" value="GO_Central"/>
</dbReference>
<dbReference type="GO" id="GO:0097275">
    <property type="term" value="P:intracellular ammonium homeostasis"/>
    <property type="evidence" value="ECO:0000250"/>
    <property type="project" value="UniProtKB"/>
</dbReference>
<dbReference type="GO" id="GO:0045648">
    <property type="term" value="P:positive regulation of erythrocyte differentiation"/>
    <property type="evidence" value="ECO:0000250"/>
    <property type="project" value="UniProtKB"/>
</dbReference>
<dbReference type="GO" id="GO:0018345">
    <property type="term" value="P:protein palmitoylation"/>
    <property type="evidence" value="ECO:0000250"/>
    <property type="project" value="UniProtKB"/>
</dbReference>
<dbReference type="GO" id="GO:0010594">
    <property type="term" value="P:regulation of endothelial cell migration"/>
    <property type="evidence" value="ECO:0000250"/>
    <property type="project" value="UniProtKB"/>
</dbReference>
<dbReference type="GO" id="GO:1903670">
    <property type="term" value="P:regulation of sprouting angiogenesis"/>
    <property type="evidence" value="ECO:0000250"/>
    <property type="project" value="UniProtKB"/>
</dbReference>
<dbReference type="FunFam" id="3.10.20.70:FF:000004">
    <property type="entry name" value="Glutamine synthetase"/>
    <property type="match status" value="1"/>
</dbReference>
<dbReference type="FunFam" id="3.30.590.10:FF:000011">
    <property type="entry name" value="Glutamine synthetase"/>
    <property type="match status" value="1"/>
</dbReference>
<dbReference type="Gene3D" id="3.10.20.70">
    <property type="entry name" value="Glutamine synthetase, N-terminal domain"/>
    <property type="match status" value="1"/>
</dbReference>
<dbReference type="Gene3D" id="3.30.590.10">
    <property type="entry name" value="Glutamine synthetase/guanido kinase, catalytic domain"/>
    <property type="match status" value="2"/>
</dbReference>
<dbReference type="InterPro" id="IPR008147">
    <property type="entry name" value="Gln_synt_N"/>
</dbReference>
<dbReference type="InterPro" id="IPR036651">
    <property type="entry name" value="Gln_synt_N_sf"/>
</dbReference>
<dbReference type="InterPro" id="IPR014746">
    <property type="entry name" value="Gln_synth/guanido_kin_cat_dom"/>
</dbReference>
<dbReference type="InterPro" id="IPR008146">
    <property type="entry name" value="Gln_synth_cat_dom"/>
</dbReference>
<dbReference type="InterPro" id="IPR027303">
    <property type="entry name" value="Gln_synth_gly_rich_site"/>
</dbReference>
<dbReference type="InterPro" id="IPR027302">
    <property type="entry name" value="Gln_synth_N_conserv_site"/>
</dbReference>
<dbReference type="InterPro" id="IPR050292">
    <property type="entry name" value="Glutamine_Synthetase"/>
</dbReference>
<dbReference type="PANTHER" id="PTHR20852">
    <property type="entry name" value="GLUTAMINE SYNTHETASE"/>
    <property type="match status" value="1"/>
</dbReference>
<dbReference type="PANTHER" id="PTHR20852:SF45">
    <property type="entry name" value="GLUTAMINE SYNTHETASE"/>
    <property type="match status" value="1"/>
</dbReference>
<dbReference type="Pfam" id="PF00120">
    <property type="entry name" value="Gln-synt_C"/>
    <property type="match status" value="1"/>
</dbReference>
<dbReference type="Pfam" id="PF03951">
    <property type="entry name" value="Gln-synt_N"/>
    <property type="match status" value="1"/>
</dbReference>
<dbReference type="SMART" id="SM01230">
    <property type="entry name" value="Gln-synt_C"/>
    <property type="match status" value="1"/>
</dbReference>
<dbReference type="SUPFAM" id="SSF54368">
    <property type="entry name" value="Glutamine synthetase, N-terminal domain"/>
    <property type="match status" value="1"/>
</dbReference>
<dbReference type="SUPFAM" id="SSF55931">
    <property type="entry name" value="Glutamine synthetase/guanido kinase"/>
    <property type="match status" value="1"/>
</dbReference>
<dbReference type="PROSITE" id="PS00180">
    <property type="entry name" value="GLNA_1"/>
    <property type="match status" value="1"/>
</dbReference>
<dbReference type="PROSITE" id="PS00181">
    <property type="entry name" value="GLNA_ATP"/>
    <property type="match status" value="1"/>
</dbReference>
<dbReference type="PROSITE" id="PS51986">
    <property type="entry name" value="GS_BETA_GRASP"/>
    <property type="match status" value="1"/>
</dbReference>
<dbReference type="PROSITE" id="PS51987">
    <property type="entry name" value="GS_CATALYTIC"/>
    <property type="match status" value="1"/>
</dbReference>
<feature type="initiator methionine" description="Removed" evidence="3">
    <location>
        <position position="1"/>
    </location>
</feature>
<feature type="chain" id="PRO_0000153137" description="Glutamine synthetase">
    <location>
        <begin position="2"/>
        <end position="373"/>
    </location>
</feature>
<feature type="domain" description="GS beta-grasp" evidence="5">
    <location>
        <begin position="24"/>
        <end position="106"/>
    </location>
</feature>
<feature type="domain" description="GS catalytic" evidence="6">
    <location>
        <begin position="113"/>
        <end position="373"/>
    </location>
</feature>
<feature type="region of interest" description="Required for glutamine-induced ubiquitination by CRL4(CRBN) and proteasomal degradation" evidence="2">
    <location>
        <begin position="2"/>
        <end position="25"/>
    </location>
</feature>
<feature type="binding site" evidence="2">
    <location>
        <position position="134"/>
    </location>
    <ligand>
        <name>ATP</name>
        <dbReference type="ChEBI" id="CHEBI:30616"/>
    </ligand>
</feature>
<feature type="binding site" evidence="2">
    <location>
        <position position="134"/>
    </location>
    <ligand>
        <name>Mn(2+)</name>
        <dbReference type="ChEBI" id="CHEBI:29035"/>
        <label>1</label>
    </ligand>
</feature>
<feature type="binding site" evidence="7 10">
    <location>
        <position position="136"/>
    </location>
    <ligand>
        <name>Mn(2+)</name>
        <dbReference type="ChEBI" id="CHEBI:29035"/>
        <label>2</label>
    </ligand>
</feature>
<feature type="binding site" evidence="7 10">
    <location>
        <position position="196"/>
    </location>
    <ligand>
        <name>Mn(2+)</name>
        <dbReference type="ChEBI" id="CHEBI:29035"/>
        <label>2</label>
    </ligand>
</feature>
<feature type="binding site" evidence="2">
    <location>
        <begin position="203"/>
        <end position="208"/>
    </location>
    <ligand>
        <name>ATP</name>
        <dbReference type="ChEBI" id="CHEBI:30616"/>
    </ligand>
</feature>
<feature type="binding site" evidence="7 10">
    <location>
        <position position="203"/>
    </location>
    <ligand>
        <name>Mn(2+)</name>
        <dbReference type="ChEBI" id="CHEBI:29035"/>
        <label>2</label>
    </ligand>
</feature>
<feature type="binding site" evidence="4">
    <location>
        <begin position="246"/>
        <end position="247"/>
    </location>
    <ligand>
        <name>L-glutamate</name>
        <dbReference type="ChEBI" id="CHEBI:29985"/>
    </ligand>
</feature>
<feature type="binding site" evidence="2">
    <location>
        <position position="253"/>
    </location>
    <ligand>
        <name>Mn(2+)</name>
        <dbReference type="ChEBI" id="CHEBI:29035"/>
        <label>1</label>
    </ligand>
</feature>
<feature type="binding site" evidence="2">
    <location>
        <begin position="255"/>
        <end position="257"/>
    </location>
    <ligand>
        <name>ATP</name>
        <dbReference type="ChEBI" id="CHEBI:30616"/>
    </ligand>
</feature>
<feature type="binding site" evidence="2">
    <location>
        <position position="319"/>
    </location>
    <ligand>
        <name>ATP</name>
        <dbReference type="ChEBI" id="CHEBI:30616"/>
    </ligand>
</feature>
<feature type="binding site" evidence="4">
    <location>
        <position position="319"/>
    </location>
    <ligand>
        <name>L-glutamate</name>
        <dbReference type="ChEBI" id="CHEBI:29985"/>
    </ligand>
</feature>
<feature type="binding site" evidence="2">
    <location>
        <position position="324"/>
    </location>
    <ligand>
        <name>ATP</name>
        <dbReference type="ChEBI" id="CHEBI:30616"/>
    </ligand>
</feature>
<feature type="binding site" evidence="2">
    <location>
        <begin position="336"/>
        <end position="338"/>
    </location>
    <ligand>
        <name>ADP</name>
        <dbReference type="ChEBI" id="CHEBI:456216"/>
    </ligand>
</feature>
<feature type="binding site" evidence="2">
    <location>
        <position position="338"/>
    </location>
    <ligand>
        <name>Mn(2+)</name>
        <dbReference type="ChEBI" id="CHEBI:29035"/>
        <label>1</label>
    </ligand>
</feature>
<feature type="binding site" evidence="4">
    <location>
        <position position="340"/>
    </location>
    <ligand>
        <name>L-glutamate</name>
        <dbReference type="ChEBI" id="CHEBI:29985"/>
    </ligand>
</feature>
<feature type="modified residue" description="N-acetylalanine" evidence="3">
    <location>
        <position position="2"/>
    </location>
</feature>
<feature type="modified residue" description="N6-acetyllysine" evidence="2">
    <location>
        <position position="11"/>
    </location>
</feature>
<feature type="modified residue" description="N6-acetyllysine" evidence="2">
    <location>
        <position position="14"/>
    </location>
</feature>
<feature type="modified residue" description="Phosphotyrosine" evidence="3">
    <location>
        <position position="104"/>
    </location>
</feature>
<feature type="modified residue" description="Phosphoserine" evidence="2">
    <location>
        <position position="343"/>
    </location>
</feature>
<feature type="helix" evidence="11">
    <location>
        <begin position="6"/>
        <end position="8"/>
    </location>
</feature>
<feature type="helix" evidence="11">
    <location>
        <begin position="11"/>
        <end position="18"/>
    </location>
</feature>
<feature type="strand" evidence="11">
    <location>
        <begin position="26"/>
        <end position="33"/>
    </location>
</feature>
<feature type="strand" evidence="11">
    <location>
        <begin position="40"/>
        <end position="49"/>
    </location>
</feature>
<feature type="helix" evidence="11">
    <location>
        <begin position="54"/>
        <end position="56"/>
    </location>
</feature>
<feature type="strand" evidence="11">
    <location>
        <begin position="60"/>
        <end position="63"/>
    </location>
</feature>
<feature type="helix" evidence="11">
    <location>
        <begin position="64"/>
        <end position="67"/>
    </location>
</feature>
<feature type="strand" evidence="11">
    <location>
        <begin position="76"/>
        <end position="86"/>
    </location>
</feature>
<feature type="turn" evidence="11">
    <location>
        <begin position="88"/>
        <end position="90"/>
    </location>
</feature>
<feature type="strand" evidence="11">
    <location>
        <begin position="95"/>
        <end position="102"/>
    </location>
</feature>
<feature type="helix" evidence="11">
    <location>
        <begin position="114"/>
        <end position="122"/>
    </location>
</feature>
<feature type="helix" evidence="11">
    <location>
        <begin position="123"/>
        <end position="127"/>
    </location>
</feature>
<feature type="strand" evidence="11">
    <location>
        <begin position="130"/>
        <end position="140"/>
    </location>
</feature>
<feature type="strand" evidence="11">
    <location>
        <begin position="144"/>
        <end position="146"/>
    </location>
</feature>
<feature type="strand" evidence="11">
    <location>
        <begin position="158"/>
        <end position="160"/>
    </location>
</feature>
<feature type="turn" evidence="11">
    <location>
        <begin position="167"/>
        <end position="169"/>
    </location>
</feature>
<feature type="helix" evidence="11">
    <location>
        <begin position="173"/>
        <end position="186"/>
    </location>
</feature>
<feature type="strand" evidence="11">
    <location>
        <begin position="190"/>
        <end position="195"/>
    </location>
</feature>
<feature type="strand" evidence="11">
    <location>
        <begin position="201"/>
        <end position="210"/>
    </location>
</feature>
<feature type="helix" evidence="11">
    <location>
        <begin position="213"/>
        <end position="232"/>
    </location>
</feature>
<feature type="strand" evidence="11">
    <location>
        <begin position="235"/>
        <end position="237"/>
    </location>
</feature>
<feature type="strand" evidence="11">
    <location>
        <begin position="245"/>
        <end position="247"/>
    </location>
</feature>
<feature type="strand" evidence="11">
    <location>
        <begin position="251"/>
        <end position="257"/>
    </location>
</feature>
<feature type="helix" evidence="11">
    <location>
        <begin position="259"/>
        <end position="262"/>
    </location>
</feature>
<feature type="turn" evidence="11">
    <location>
        <begin position="264"/>
        <end position="266"/>
    </location>
</feature>
<feature type="helix" evidence="11">
    <location>
        <begin position="267"/>
        <end position="278"/>
    </location>
</feature>
<feature type="helix" evidence="11">
    <location>
        <begin position="281"/>
        <end position="287"/>
    </location>
</feature>
<feature type="turn" evidence="11">
    <location>
        <begin position="290"/>
        <end position="295"/>
    </location>
</feature>
<feature type="helix" evidence="11">
    <location>
        <begin position="296"/>
        <end position="298"/>
    </location>
</feature>
<feature type="turn" evidence="11">
    <location>
        <begin position="303"/>
        <end position="305"/>
    </location>
</feature>
<feature type="strand" evidence="11">
    <location>
        <begin position="314"/>
        <end position="316"/>
    </location>
</feature>
<feature type="strand" evidence="11">
    <location>
        <begin position="321"/>
        <end position="325"/>
    </location>
</feature>
<feature type="helix" evidence="11">
    <location>
        <begin position="327"/>
        <end position="332"/>
    </location>
</feature>
<feature type="strand" evidence="11">
    <location>
        <begin position="337"/>
        <end position="339"/>
    </location>
</feature>
<feature type="helix" evidence="11">
    <location>
        <begin position="348"/>
        <end position="359"/>
    </location>
</feature>
<feature type="strand" evidence="11">
    <location>
        <begin position="365"/>
        <end position="367"/>
    </location>
</feature>
<protein>
    <recommendedName>
        <fullName evidence="8">Glutamine synthetase</fullName>
        <shortName evidence="8">GS</shortName>
        <ecNumber evidence="2">6.3.1.2</ecNumber>
    </recommendedName>
    <alternativeName>
        <fullName evidence="9">Glutamate--ammonia ligase</fullName>
    </alternativeName>
    <alternativeName>
        <fullName evidence="9">Palmitoyltransferase GLUL</fullName>
        <ecNumber evidence="2">2.3.1.225</ecNumber>
    </alternativeName>
</protein>
<sequence>MATSASSHLNKGIKQVYMSLPQGEKVQAMYIWIDGTGEGLRCKTRTLDSEPKGVEELPEWNFDGSSTFQSEGSNSDMYLVPAAMFRDPFRKDPNKLVFCEVFKYNRKPAETNLRHTCKRIMDMVSNQHPWFGMEQEYTLMGTDGHPFGWPSNGFPGPQGPYYCGVGADKAYGRDIVEAHYRACLYAGIKIAGTNAEVMPAQWEFQIGPCEGIDMGDHLWVARFILHRVCEDFGVIATFDPKPIPGNWNGAGCHTNFSTKAMREENGLKYIEESIEKLSKRHQYHIRAYDPKGGLDNARRLTGFHETSNINDFSAGVANRGASIRIPRTVGQEKKGYFEDRRPSANCDPFSVTEALIRTCLLNETGDEPFQYKN</sequence>
<reference key="1">
    <citation type="journal article" date="2003" name="Biochem. J.">
        <title>A splice variant acquiring an extra transcript leader region decreases the translation of glutamine synthetase gene.</title>
        <authorList>
            <person name="Shin D."/>
            <person name="Park S."/>
            <person name="Park C."/>
        </authorList>
    </citation>
    <scope>NUCLEOTIDE SEQUENCE [GENOMIC DNA / MRNA]</scope>
</reference>
<reference evidence="10" key="2">
    <citation type="journal article" date="2008" name="J. Mol. Biol.">
        <title>Crystal structures of mammalian glutamine synthetases illustrate substrate-induced conformational changes and provide opportunities for drug and herbicide design.</title>
        <authorList>
            <person name="Krajewski W.W."/>
            <person name="Collins R."/>
            <person name="Holmberg-Schiavone L."/>
            <person name="Jones T.A."/>
            <person name="Karlberg T."/>
            <person name="Mowbray S.L."/>
        </authorList>
    </citation>
    <scope>X-RAY CRYSTALLOGRAPHY (3.00 ANGSTROMS) IN COMPLEX WITH MAGNESIUM</scope>
    <scope>SUBUNIT</scope>
</reference>
<comment type="function">
    <text evidence="2 3">Glutamine synthetase that catalyzes the ATP-dependent conversion of glutamate and ammonia to glutamine. Its role depends on tissue localization: in the brain, it regulates the levels of toxic ammonia and converts neurotoxic glutamate to harmless glutamine, whereas in the liver, it is one of the enzymes responsible for the removal of ammonia. Plays a key role in ammonium detoxification during erythropoiesis: the glutamine synthetase activity is required to remove ammonium generated by porphobilinogen deaminase (HMBS) during heme biosynthesis to prevent ammonium accumulation and oxidative stress (By similarity). Essential for proliferation of fetal skin fibroblasts (By similarity). Independently of its glutamine synthetase activity, required for endothelial cell migration during vascular development (By similarity). Involved in angiogenesis by regulating membrane localization and activation of the GTPase RHOJ, possibly by promoting RHOJ palmitoylation. May act as a palmitoyltransferase for RHOJ: able to autopalmitoylate and then transfer the palmitoyl group to RHOJ. Plays a role in ribosomal 40S subunit biogenesis. Through the interaction with BEST2, inhibits BEST2 channel activity by affecting the gating at the aperture in the absence of intracellular L-glutamate, but sensitizes BEST2 to intracellular L-glutamate, which promotes the opening of BEST2 and thus relieves its inhibitory effect on BEST2 (By similarity).</text>
</comment>
<comment type="catalytic activity">
    <reaction evidence="2">
        <text>L-glutamate + NH4(+) + ATP = L-glutamine + ADP + phosphate + H(+)</text>
        <dbReference type="Rhea" id="RHEA:16169"/>
        <dbReference type="ChEBI" id="CHEBI:15378"/>
        <dbReference type="ChEBI" id="CHEBI:28938"/>
        <dbReference type="ChEBI" id="CHEBI:29985"/>
        <dbReference type="ChEBI" id="CHEBI:30616"/>
        <dbReference type="ChEBI" id="CHEBI:43474"/>
        <dbReference type="ChEBI" id="CHEBI:58359"/>
        <dbReference type="ChEBI" id="CHEBI:456216"/>
        <dbReference type="EC" id="6.3.1.2"/>
    </reaction>
</comment>
<comment type="catalytic activity">
    <reaction evidence="2">
        <text>L-cysteinyl-[protein] + hexadecanoyl-CoA = S-hexadecanoyl-L-cysteinyl-[protein] + CoA</text>
        <dbReference type="Rhea" id="RHEA:36683"/>
        <dbReference type="Rhea" id="RHEA-COMP:10131"/>
        <dbReference type="Rhea" id="RHEA-COMP:11032"/>
        <dbReference type="ChEBI" id="CHEBI:29950"/>
        <dbReference type="ChEBI" id="CHEBI:57287"/>
        <dbReference type="ChEBI" id="CHEBI:57379"/>
        <dbReference type="ChEBI" id="CHEBI:74151"/>
        <dbReference type="EC" id="2.3.1.225"/>
    </reaction>
</comment>
<comment type="cofactor">
    <cofactor evidence="7">
        <name>Mg(2+)</name>
        <dbReference type="ChEBI" id="CHEBI:18420"/>
    </cofactor>
    <cofactor evidence="2">
        <name>Mn(2+)</name>
        <dbReference type="ChEBI" id="CHEBI:29035"/>
    </cofactor>
</comment>
<comment type="activity regulation">
    <text evidence="2">Glutamine synthetase activity is inhibited by methionine sulfoximine (MSO).</text>
</comment>
<comment type="subunit">
    <text evidence="2 3 7">Decamer; composed of two pentamers (PubMed:18005987). Interacts with PALMD (By similarity). Interacts with RHOJ (By similarity). Interacts with BEST2; this interaction tethers a fraction of GLUL to the membrane, causing a decrease of cytosolic glutamine synthase (GS) activity and inhibits the chloride channel activity of BEST2 by affecting the gating at the aperture in the absence of intracellular glutamate (By similarity).</text>
</comment>
<comment type="subcellular location">
    <subcellularLocation>
        <location evidence="2">Cytoplasm</location>
        <location evidence="2">Cytosol</location>
    </subcellularLocation>
    <subcellularLocation>
        <location evidence="1">Microsome</location>
    </subcellularLocation>
    <subcellularLocation>
        <location evidence="1">Mitochondrion</location>
    </subcellularLocation>
    <subcellularLocation>
        <location evidence="2">Cell membrane</location>
        <topology evidence="2">Lipid-anchor</topology>
    </subcellularLocation>
    <text evidence="2">Mainly localizes in the cytosol, with a fraction associated with the cell membrane.</text>
</comment>
<comment type="PTM">
    <text evidence="2">Palmitoylated; undergoes autopalmitoylation.</text>
</comment>
<comment type="PTM">
    <text evidence="2">Acetylated by EP300/p300; acetylation is stimulated by increased glutamine levels and promotes ubiquitin-mediated proteasomal degradation.</text>
</comment>
<comment type="PTM">
    <text evidence="2 3">Ubiquitinated by ZNRF1 (By similarity). Ubiquitinated by the DCX (DDB1-CUL4-X-box) E3 ubiquitin-protein ligase complex called CRL4(CRBN), leading to proteasomal degradation (By similarity).</text>
</comment>
<comment type="similarity">
    <text evidence="9">Belongs to the glutamine synthetase family.</text>
</comment>
<name>GLNA_CANLF</name>
<organism>
    <name type="scientific">Canis lupus familiaris</name>
    <name type="common">Dog</name>
    <name type="synonym">Canis familiaris</name>
    <dbReference type="NCBI Taxonomy" id="9615"/>
    <lineage>
        <taxon>Eukaryota</taxon>
        <taxon>Metazoa</taxon>
        <taxon>Chordata</taxon>
        <taxon>Craniata</taxon>
        <taxon>Vertebrata</taxon>
        <taxon>Euteleostomi</taxon>
        <taxon>Mammalia</taxon>
        <taxon>Eutheria</taxon>
        <taxon>Laurasiatheria</taxon>
        <taxon>Carnivora</taxon>
        <taxon>Caniformia</taxon>
        <taxon>Canidae</taxon>
        <taxon>Canis</taxon>
    </lineage>
</organism>